<gene>
    <name evidence="2" type="primary">fsdR</name>
    <name type="synonym">eqiS</name>
</gene>
<proteinExistence type="predicted"/>
<comment type="function">
    <text evidence="4">Transcription factor that regulates the expression of the gene cluster that mediates the biosynthesis of fusaridione A (PubMed:23614392).</text>
</comment>
<comment type="subcellular location">
    <subcellularLocation>
        <location evidence="3">Nucleus</location>
    </subcellularLocation>
</comment>
<evidence type="ECO:0000256" key="1">
    <source>
        <dbReference type="SAM" id="MobiDB-lite"/>
    </source>
</evidence>
<evidence type="ECO:0000303" key="2">
    <source>
    </source>
</evidence>
<evidence type="ECO:0000305" key="3"/>
<evidence type="ECO:0000305" key="4">
    <source>
    </source>
</evidence>
<sequence>MSTGPPSGISLVSMTTPRKSGQHTPESWSKWTHPSIEPLFTKRVMKPLPSWTGAFSLVSEFFTHEHQVFPCFNAPAFMCLLGQQYSVECTESPAWWVSLNSVLAIAQRRRAEAAQSAEAEDLAWAYASNALAGTWDILMRSTQLSSVQALLAIAWFFIGTPNPQPSFMLVGCAVRLAHSIGIHVESQDPSISPAEANLRKKVFWIAICLDQELCLRTGRSPCHDLNAGYVDPPMDSLDETEITKTVDGHELNLFQSQIQLAVIQGAIYRDLHSGKAPPNCIADSVADLLQKLENWRIEFAPTLTHDSTVRCEHHGLMRLYLSYYNAVIVVSRAHSLAYWVSPNHPAFSALPSSMRDSIENCLNASRCIIELSKLIPVTWRSFHWDIISILMSAVVILCIMAIRNPMNELATNDMGSVGDVLHIFKTLDEAYGNTYLTQVQKVCEKLYRKAHYAMQSSNAQPVESVDVVSPALEDSSNANQQQARHTDSTLEFNPNAFEQTMPYPLPMGWDLDTFLWTPTI</sequence>
<name>FSDR_FUSHE</name>
<organism>
    <name type="scientific">Fusarium heterosporum</name>
    <dbReference type="NCBI Taxonomy" id="42747"/>
    <lineage>
        <taxon>Eukaryota</taxon>
        <taxon>Fungi</taxon>
        <taxon>Dikarya</taxon>
        <taxon>Ascomycota</taxon>
        <taxon>Pezizomycotina</taxon>
        <taxon>Sordariomycetes</taxon>
        <taxon>Hypocreomycetidae</taxon>
        <taxon>Hypocreales</taxon>
        <taxon>Nectriaceae</taxon>
        <taxon>Fusarium</taxon>
        <taxon>Fusarium heterosporum species complex</taxon>
    </lineage>
</organism>
<keyword id="KW-0539">Nucleus</keyword>
<feature type="chain" id="PRO_0000441306" description="Fusaridione A cluster transcription factor fsdR">
    <location>
        <begin position="1"/>
        <end position="520"/>
    </location>
</feature>
<feature type="region of interest" description="Disordered" evidence="1">
    <location>
        <begin position="1"/>
        <end position="30"/>
    </location>
</feature>
<protein>
    <recommendedName>
        <fullName evidence="2">Fusaridione A cluster transcription factor fsdR</fullName>
    </recommendedName>
    <alternativeName>
        <fullName evidence="2">Fusaridione A biosynthesis protein R</fullName>
    </alternativeName>
</protein>
<reference key="1">
    <citation type="journal article" date="2005" name="Chem. Commun. (Camb.)">
        <title>Equisetin biosynthesis in Fusarium heterosporum.</title>
        <authorList>
            <person name="Sims J.W."/>
            <person name="Fillmore J.P."/>
            <person name="Warner D.D."/>
            <person name="Schmidt E.W."/>
        </authorList>
    </citation>
    <scope>NUCLEOTIDE SEQUENCE [GENOMIC DNA]</scope>
    <source>
        <strain>ATCC 74349 / MF6069</strain>
    </source>
</reference>
<reference key="2">
    <citation type="journal article" date="2013" name="ACS Chem. Biol.">
        <title>Two related pyrrolidinedione synthetase loci in Fusarium heterosporum ATCC 74349 produce divergent metabolites.</title>
        <authorList>
            <person name="Kakule T.B."/>
            <person name="Sardar D."/>
            <person name="Lin Z."/>
            <person name="Schmidt E.W."/>
        </authorList>
    </citation>
    <scope>NUCLEOTIDE SEQUENCE [GENOMIC DNA]</scope>
    <scope>FUNCTION</scope>
    <source>
        <strain>ATCC 74349 / MF6069</strain>
    </source>
</reference>
<dbReference type="EMBL" id="AY700570">
    <property type="protein sequence ID" value="AAV66104.2"/>
    <property type="molecule type" value="Genomic_DNA"/>
</dbReference>
<dbReference type="GO" id="GO:0005634">
    <property type="term" value="C:nucleus"/>
    <property type="evidence" value="ECO:0007669"/>
    <property type="project" value="UniProtKB-SubCell"/>
</dbReference>
<dbReference type="GO" id="GO:0003677">
    <property type="term" value="F:DNA binding"/>
    <property type="evidence" value="ECO:0007669"/>
    <property type="project" value="InterPro"/>
</dbReference>
<dbReference type="GO" id="GO:0003700">
    <property type="term" value="F:DNA-binding transcription factor activity"/>
    <property type="evidence" value="ECO:0007669"/>
    <property type="project" value="InterPro"/>
</dbReference>
<dbReference type="GO" id="GO:0008270">
    <property type="term" value="F:zinc ion binding"/>
    <property type="evidence" value="ECO:0007669"/>
    <property type="project" value="InterPro"/>
</dbReference>
<dbReference type="GO" id="GO:0006351">
    <property type="term" value="P:DNA-templated transcription"/>
    <property type="evidence" value="ECO:0007669"/>
    <property type="project" value="InterPro"/>
</dbReference>
<dbReference type="CDD" id="cd12148">
    <property type="entry name" value="fungal_TF_MHR"/>
    <property type="match status" value="1"/>
</dbReference>
<dbReference type="InterPro" id="IPR050987">
    <property type="entry name" value="AtrR-like"/>
</dbReference>
<dbReference type="InterPro" id="IPR007219">
    <property type="entry name" value="Transcription_factor_dom_fun"/>
</dbReference>
<dbReference type="PANTHER" id="PTHR46910:SF25">
    <property type="entry name" value="ABC-TRANSPORTER-REGULATING TRANSCRIPTION FACTOR"/>
    <property type="match status" value="1"/>
</dbReference>
<dbReference type="PANTHER" id="PTHR46910">
    <property type="entry name" value="TRANSCRIPTION FACTOR PDR1"/>
    <property type="match status" value="1"/>
</dbReference>
<dbReference type="Pfam" id="PF04082">
    <property type="entry name" value="Fungal_trans"/>
    <property type="match status" value="1"/>
</dbReference>
<dbReference type="SMART" id="SM00906">
    <property type="entry name" value="Fungal_trans"/>
    <property type="match status" value="1"/>
</dbReference>
<accession>Q5SBL4</accession>